<gene>
    <name type="primary">PHT4;7</name>
    <name type="ordered locus">Os12g0180100</name>
    <name type="ordered locus">LOC_Os12g07970</name>
</gene>
<organism>
    <name type="scientific">Oryza sativa subsp. japonica</name>
    <name type="common">Rice</name>
    <dbReference type="NCBI Taxonomy" id="39947"/>
    <lineage>
        <taxon>Eukaryota</taxon>
        <taxon>Viridiplantae</taxon>
        <taxon>Streptophyta</taxon>
        <taxon>Embryophyta</taxon>
        <taxon>Tracheophyta</taxon>
        <taxon>Spermatophyta</taxon>
        <taxon>Magnoliopsida</taxon>
        <taxon>Liliopsida</taxon>
        <taxon>Poales</taxon>
        <taxon>Poaceae</taxon>
        <taxon>BOP clade</taxon>
        <taxon>Oryzoideae</taxon>
        <taxon>Oryzeae</taxon>
        <taxon>Oryzinae</taxon>
        <taxon>Oryza</taxon>
        <taxon>Oryza sativa</taxon>
    </lineage>
</organism>
<dbReference type="EMBL" id="DP000011">
    <property type="protein sequence ID" value="ABA95938.1"/>
    <property type="molecule type" value="Genomic_DNA"/>
</dbReference>
<dbReference type="EMBL" id="DP000011">
    <property type="protein sequence ID" value="ABA95939.1"/>
    <property type="molecule type" value="Genomic_DNA"/>
</dbReference>
<dbReference type="EMBL" id="AP008218">
    <property type="protein sequence ID" value="BAF29330.1"/>
    <property type="molecule type" value="Genomic_DNA"/>
</dbReference>
<dbReference type="EMBL" id="AP014968">
    <property type="protein sequence ID" value="BAT16138.1"/>
    <property type="molecule type" value="Genomic_DNA"/>
</dbReference>
<dbReference type="EMBL" id="AK071259">
    <property type="status" value="NOT_ANNOTATED_CDS"/>
    <property type="molecule type" value="mRNA"/>
</dbReference>
<dbReference type="RefSeq" id="NP_001410284.1">
    <property type="nucleotide sequence ID" value="NM_001423355.1"/>
</dbReference>
<dbReference type="RefSeq" id="XP_015618056.1">
    <property type="nucleotide sequence ID" value="XM_015762570.3"/>
</dbReference>
<dbReference type="RefSeq" id="XP_015618057.1">
    <property type="nucleotide sequence ID" value="XM_015762571.1"/>
</dbReference>
<dbReference type="RefSeq" id="XP_015618058.1">
    <property type="nucleotide sequence ID" value="XM_015762572.1"/>
</dbReference>
<dbReference type="SMR" id="Q2QWW7"/>
<dbReference type="FunCoup" id="Q2QWW7">
    <property type="interactions" value="131"/>
</dbReference>
<dbReference type="STRING" id="39947.Q2QWW7"/>
<dbReference type="PaxDb" id="39947-Q2QWW7"/>
<dbReference type="EnsemblPlants" id="Os12t0180100-01">
    <property type="protein sequence ID" value="Os12t0180100-01"/>
    <property type="gene ID" value="Os12g0180100"/>
</dbReference>
<dbReference type="GeneID" id="4351670"/>
<dbReference type="Gramene" id="Os12t0180100-01">
    <property type="protein sequence ID" value="Os12t0180100-01"/>
    <property type="gene ID" value="Os12g0180100"/>
</dbReference>
<dbReference type="KEGG" id="dosa:Os12g0180100"/>
<dbReference type="KEGG" id="osa:4351670"/>
<dbReference type="eggNOG" id="KOG2532">
    <property type="taxonomic scope" value="Eukaryota"/>
</dbReference>
<dbReference type="HOGENOM" id="CLU_001265_5_11_1"/>
<dbReference type="InParanoid" id="Q2QWW7"/>
<dbReference type="OMA" id="LITFWMP"/>
<dbReference type="OrthoDB" id="2985014at2759"/>
<dbReference type="Proteomes" id="UP000000763">
    <property type="component" value="Chromosome 12"/>
</dbReference>
<dbReference type="Proteomes" id="UP000059680">
    <property type="component" value="Chromosome 12"/>
</dbReference>
<dbReference type="ExpressionAtlas" id="Q2QWW7">
    <property type="expression patterns" value="baseline and differential"/>
</dbReference>
<dbReference type="GO" id="GO:0005886">
    <property type="term" value="C:plasma membrane"/>
    <property type="evidence" value="ECO:0007669"/>
    <property type="project" value="UniProtKB-SubCell"/>
</dbReference>
<dbReference type="GO" id="GO:0005315">
    <property type="term" value="F:phosphate transmembrane transporter activity"/>
    <property type="evidence" value="ECO:0007669"/>
    <property type="project" value="UniProtKB-ARBA"/>
</dbReference>
<dbReference type="GO" id="GO:0006811">
    <property type="term" value="P:monoatomic ion transport"/>
    <property type="evidence" value="ECO:0007669"/>
    <property type="project" value="UniProtKB-KW"/>
</dbReference>
<dbReference type="CDD" id="cd17380">
    <property type="entry name" value="MFS_SLC17A9_like"/>
    <property type="match status" value="1"/>
</dbReference>
<dbReference type="FunFam" id="1.20.1250.20:FF:000199">
    <property type="entry name" value="Probable anion transporter 7"/>
    <property type="match status" value="1"/>
</dbReference>
<dbReference type="FunFam" id="1.20.1250.20:FF:000220">
    <property type="entry name" value="Probable anion transporter 7"/>
    <property type="match status" value="1"/>
</dbReference>
<dbReference type="Gene3D" id="1.20.1250.20">
    <property type="entry name" value="MFS general substrate transporter like domains"/>
    <property type="match status" value="2"/>
</dbReference>
<dbReference type="InterPro" id="IPR011701">
    <property type="entry name" value="MFS"/>
</dbReference>
<dbReference type="InterPro" id="IPR020846">
    <property type="entry name" value="MFS_dom"/>
</dbReference>
<dbReference type="InterPro" id="IPR050382">
    <property type="entry name" value="MFS_Na/Anion_cotransporter"/>
</dbReference>
<dbReference type="InterPro" id="IPR036259">
    <property type="entry name" value="MFS_trans_sf"/>
</dbReference>
<dbReference type="InterPro" id="IPR044777">
    <property type="entry name" value="SLC17A9-like"/>
</dbReference>
<dbReference type="PANTHER" id="PTHR11662:SF282">
    <property type="entry name" value="ANION TRANSPORTER 5-RELATED"/>
    <property type="match status" value="1"/>
</dbReference>
<dbReference type="PANTHER" id="PTHR11662">
    <property type="entry name" value="SOLUTE CARRIER FAMILY 17"/>
    <property type="match status" value="1"/>
</dbReference>
<dbReference type="Pfam" id="PF07690">
    <property type="entry name" value="MFS_1"/>
    <property type="match status" value="1"/>
</dbReference>
<dbReference type="SUPFAM" id="SSF103473">
    <property type="entry name" value="MFS general substrate transporter"/>
    <property type="match status" value="1"/>
</dbReference>
<dbReference type="PROSITE" id="PS50850">
    <property type="entry name" value="MFS"/>
    <property type="match status" value="1"/>
</dbReference>
<sequence>MTALTRMKFPKRYVIVLLTFICTNVCYIERVGFSIAYTVAADAIGVNQANKGMILSMFYYGYVLSQIPGGWAAQRIGGRRVLLLSFVLWSLICGLIPLDPKREVILVLSRLFVGVAQGFIFPAIHTVLAQWVPPQERSRSVSLTTSGMYLGAAGGMLFFPSLVKHMGAQSVFFVEAVLGVAWSVIWLKFSSEPPRTDLPKVSMPKVASREKIKAQAGGVVAPRTVKIPWRRIIFSLPVWAIVVNNFTFHYALYVLMNWLPTYFELGLQLSLQDMGSSKMLPYFNMFIFSNIGGVVADHLITRRILSITKTRKLLNTIGFVVSAVALMALPLFRTPSGTVLCSSISLGFLALGRAGFAVNHMDVAPKFAGIVMGVSNTAGTLAGIVGVGLTGSILEGAKASNMDLTNSETWKTVFFVPGYLCIFSSIIFLIFSTGEKIFE</sequence>
<feature type="signal peptide" evidence="2">
    <location>
        <begin position="1"/>
        <end position="28"/>
    </location>
</feature>
<feature type="chain" id="PRO_0000383105" description="Probable anion transporter 7">
    <location>
        <begin position="29"/>
        <end position="439"/>
    </location>
</feature>
<feature type="transmembrane region" description="Helical" evidence="2">
    <location>
        <begin position="53"/>
        <end position="73"/>
    </location>
</feature>
<feature type="transmembrane region" description="Helical" evidence="2">
    <location>
        <begin position="81"/>
        <end position="101"/>
    </location>
</feature>
<feature type="transmembrane region" description="Helical" evidence="2">
    <location>
        <begin position="104"/>
        <end position="124"/>
    </location>
</feature>
<feature type="transmembrane region" description="Helical" evidence="2">
    <location>
        <begin position="143"/>
        <end position="163"/>
    </location>
</feature>
<feature type="transmembrane region" description="Helical" evidence="2">
    <location>
        <begin position="167"/>
        <end position="187"/>
    </location>
</feature>
<feature type="transmembrane region" description="Helical" evidence="2">
    <location>
        <begin position="232"/>
        <end position="252"/>
    </location>
</feature>
<feature type="transmembrane region" description="Helical" evidence="2">
    <location>
        <begin position="280"/>
        <end position="300"/>
    </location>
</feature>
<feature type="transmembrane region" description="Helical" evidence="2">
    <location>
        <begin position="312"/>
        <end position="332"/>
    </location>
</feature>
<feature type="transmembrane region" description="Helical" evidence="2">
    <location>
        <begin position="338"/>
        <end position="358"/>
    </location>
</feature>
<feature type="transmembrane region" description="Helical" evidence="2">
    <location>
        <begin position="367"/>
        <end position="387"/>
    </location>
</feature>
<feature type="transmembrane region" description="Helical" evidence="2">
    <location>
        <begin position="412"/>
        <end position="432"/>
    </location>
</feature>
<feature type="sequence conflict" description="In Ref. 5; AK071259." evidence="3" ref="5">
    <original>K</original>
    <variation>R</variation>
    <location>
        <position position="309"/>
    </location>
</feature>
<feature type="sequence conflict" description="In Ref. 5; AK071259." evidence="3" ref="5">
    <original>P</original>
    <variation>L</variation>
    <location>
        <position position="417"/>
    </location>
</feature>
<name>PHT47_ORYSJ</name>
<protein>
    <recommendedName>
        <fullName>Probable anion transporter 7</fullName>
    </recommendedName>
    <alternativeName>
        <fullName>Phosphate transporter 4;7</fullName>
    </alternativeName>
</protein>
<comment type="function">
    <text evidence="1">Probable anion transporter.</text>
</comment>
<comment type="subcellular location">
    <subcellularLocation>
        <location evidence="3">Cell membrane</location>
        <topology evidence="3">Multi-pass membrane protein</topology>
    </subcellularLocation>
</comment>
<comment type="similarity">
    <text evidence="3">Belongs to the major facilitator superfamily. Sodium/anion cotransporter (TC 2.A.1.14) family.</text>
</comment>
<evidence type="ECO:0000250" key="1"/>
<evidence type="ECO:0000255" key="2"/>
<evidence type="ECO:0000305" key="3"/>
<keyword id="KW-1003">Cell membrane</keyword>
<keyword id="KW-0406">Ion transport</keyword>
<keyword id="KW-0472">Membrane</keyword>
<keyword id="KW-1185">Reference proteome</keyword>
<keyword id="KW-0732">Signal</keyword>
<keyword id="KW-0812">Transmembrane</keyword>
<keyword id="KW-1133">Transmembrane helix</keyword>
<keyword id="KW-0813">Transport</keyword>
<proteinExistence type="evidence at transcript level"/>
<reference key="1">
    <citation type="journal article" date="2005" name="BMC Biol.">
        <title>The sequence of rice chromosomes 11 and 12, rich in disease resistance genes and recent gene duplications.</title>
        <authorList>
            <consortium name="The rice chromosomes 11 and 12 sequencing consortia"/>
        </authorList>
    </citation>
    <scope>NUCLEOTIDE SEQUENCE [LARGE SCALE GENOMIC DNA]</scope>
    <source>
        <strain>cv. Nipponbare</strain>
    </source>
</reference>
<reference key="2">
    <citation type="journal article" date="2005" name="Nature">
        <title>The map-based sequence of the rice genome.</title>
        <authorList>
            <consortium name="International rice genome sequencing project (IRGSP)"/>
        </authorList>
    </citation>
    <scope>NUCLEOTIDE SEQUENCE [LARGE SCALE GENOMIC DNA]</scope>
    <source>
        <strain>cv. Nipponbare</strain>
    </source>
</reference>
<reference key="3">
    <citation type="journal article" date="2008" name="Nucleic Acids Res.">
        <title>The rice annotation project database (RAP-DB): 2008 update.</title>
        <authorList>
            <consortium name="The rice annotation project (RAP)"/>
        </authorList>
    </citation>
    <scope>GENOME REANNOTATION</scope>
    <source>
        <strain>cv. Nipponbare</strain>
    </source>
</reference>
<reference key="4">
    <citation type="journal article" date="2013" name="Rice">
        <title>Improvement of the Oryza sativa Nipponbare reference genome using next generation sequence and optical map data.</title>
        <authorList>
            <person name="Kawahara Y."/>
            <person name="de la Bastide M."/>
            <person name="Hamilton J.P."/>
            <person name="Kanamori H."/>
            <person name="McCombie W.R."/>
            <person name="Ouyang S."/>
            <person name="Schwartz D.C."/>
            <person name="Tanaka T."/>
            <person name="Wu J."/>
            <person name="Zhou S."/>
            <person name="Childs K.L."/>
            <person name="Davidson R.M."/>
            <person name="Lin H."/>
            <person name="Quesada-Ocampo L."/>
            <person name="Vaillancourt B."/>
            <person name="Sakai H."/>
            <person name="Lee S.S."/>
            <person name="Kim J."/>
            <person name="Numa H."/>
            <person name="Itoh T."/>
            <person name="Buell C.R."/>
            <person name="Matsumoto T."/>
        </authorList>
    </citation>
    <scope>GENOME REANNOTATION</scope>
    <source>
        <strain>cv. Nipponbare</strain>
    </source>
</reference>
<reference key="5">
    <citation type="journal article" date="2003" name="Science">
        <title>Collection, mapping, and annotation of over 28,000 cDNA clones from japonica rice.</title>
        <authorList>
            <consortium name="The rice full-length cDNA consortium"/>
        </authorList>
    </citation>
    <scope>NUCLEOTIDE SEQUENCE [LARGE SCALE MRNA]</scope>
    <source>
        <strain>cv. Nipponbare</strain>
    </source>
</reference>
<reference key="6">
    <citation type="journal article" date="2008" name="Plant Signal. Behav.">
        <title>Differential expression and phylogenetic analysis suggest specialization of plastid-localized members of the PHT4 phosphate transporter family for photosynthetic and heterotrophic tissues.</title>
        <authorList>
            <person name="Guo B."/>
            <person name="Irigoyen S."/>
            <person name="Fowler T.B."/>
            <person name="Versaw W.K."/>
        </authorList>
    </citation>
    <scope>GENE FAMILY</scope>
    <scope>NOMENCLATURE</scope>
</reference>
<accession>Q2QWW7</accession>
<accession>F4MGI3</accession>